<comment type="subunit">
    <text evidence="1">Homodimer and heterodimers.</text>
</comment>
<comment type="subcellular location">
    <subcellularLocation>
        <location evidence="1">Cell membrane</location>
        <topology evidence="1">Multi-pass membrane protein</topology>
    </subcellularLocation>
</comment>
<comment type="similarity">
    <text evidence="4">Belongs to the Casparian strip membrane proteins (CASP) family.</text>
</comment>
<organism>
    <name type="scientific">Arabidopsis lyrata subsp. lyrata</name>
    <name type="common">Lyre-leaved rock-cress</name>
    <dbReference type="NCBI Taxonomy" id="81972"/>
    <lineage>
        <taxon>Eukaryota</taxon>
        <taxon>Viridiplantae</taxon>
        <taxon>Streptophyta</taxon>
        <taxon>Embryophyta</taxon>
        <taxon>Tracheophyta</taxon>
        <taxon>Spermatophyta</taxon>
        <taxon>Magnoliopsida</taxon>
        <taxon>eudicotyledons</taxon>
        <taxon>Gunneridae</taxon>
        <taxon>Pentapetalae</taxon>
        <taxon>rosids</taxon>
        <taxon>malvids</taxon>
        <taxon>Brassicales</taxon>
        <taxon>Brassicaceae</taxon>
        <taxon>Camelineae</taxon>
        <taxon>Arabidopsis</taxon>
    </lineage>
</organism>
<dbReference type="EMBL" id="GL348719">
    <property type="protein sequence ID" value="EFH46485.1"/>
    <property type="molecule type" value="Genomic_DNA"/>
</dbReference>
<dbReference type="STRING" id="81972.D7MAF7"/>
<dbReference type="EnsemblPlants" id="scaffold_702978.1">
    <property type="protein sequence ID" value="scaffold_702978.1"/>
    <property type="gene ID" value="scaffold_702978.1"/>
</dbReference>
<dbReference type="Gramene" id="scaffold_702978.1">
    <property type="protein sequence ID" value="scaffold_702978.1"/>
    <property type="gene ID" value="scaffold_702978.1"/>
</dbReference>
<dbReference type="KEGG" id="aly:9306297"/>
<dbReference type="eggNOG" id="ENOG502S2UF">
    <property type="taxonomic scope" value="Eukaryota"/>
</dbReference>
<dbReference type="HOGENOM" id="CLU_066104_1_2_1"/>
<dbReference type="OrthoDB" id="1926504at2759"/>
<dbReference type="Proteomes" id="UP000008694">
    <property type="component" value="Unassembled WGS sequence"/>
</dbReference>
<dbReference type="GO" id="GO:0005886">
    <property type="term" value="C:plasma membrane"/>
    <property type="evidence" value="ECO:0007669"/>
    <property type="project" value="UniProtKB-SubCell"/>
</dbReference>
<dbReference type="InterPro" id="IPR006459">
    <property type="entry name" value="CASP/CASPL"/>
</dbReference>
<dbReference type="InterPro" id="IPR006702">
    <property type="entry name" value="CASP_dom"/>
</dbReference>
<dbReference type="InterPro" id="IPR044173">
    <property type="entry name" value="CASPL"/>
</dbReference>
<dbReference type="NCBIfam" id="TIGR01569">
    <property type="entry name" value="A_tha_TIGR01569"/>
    <property type="match status" value="1"/>
</dbReference>
<dbReference type="PANTHER" id="PTHR36488">
    <property type="entry name" value="CASP-LIKE PROTEIN 1U1"/>
    <property type="match status" value="1"/>
</dbReference>
<dbReference type="PANTHER" id="PTHR36488:SF8">
    <property type="entry name" value="CASP-LIKE PROTEIN 1U1"/>
    <property type="match status" value="1"/>
</dbReference>
<dbReference type="Pfam" id="PF04535">
    <property type="entry name" value="CASP_dom"/>
    <property type="match status" value="1"/>
</dbReference>
<sequence length="194" mass="20677">MGSDETKSTLDTERSTVPRTGTTTKSCSITQVVLRFVLFAATLTSIVVMVTSKQTKNIFIPGTPIRIPAAKFTNSPALIYFVVALSVACFYSIVSTFVTVSAFKKHSCSAILLLNLAIMDAVMVGIVASATGAGGGVAYLGLKGNKEVRWGKICNIYDKFCRHVGGAIAVSLFASVILLLLSIISVLSLYKKIR</sequence>
<keyword id="KW-1003">Cell membrane</keyword>
<keyword id="KW-0472">Membrane</keyword>
<keyword id="KW-1185">Reference proteome</keyword>
<keyword id="KW-0812">Transmembrane</keyword>
<keyword id="KW-1133">Transmembrane helix</keyword>
<protein>
    <recommendedName>
        <fullName>CASP-like protein 1D1</fullName>
        <shortName>AlCASPL1D1</shortName>
    </recommendedName>
</protein>
<evidence type="ECO:0000250" key="1"/>
<evidence type="ECO:0000255" key="2"/>
<evidence type="ECO:0000256" key="3">
    <source>
        <dbReference type="SAM" id="MobiDB-lite"/>
    </source>
</evidence>
<evidence type="ECO:0000305" key="4"/>
<proteinExistence type="inferred from homology"/>
<name>CSPL6_ARALL</name>
<gene>
    <name type="ORF">ARALYDRAFT_915236</name>
</gene>
<feature type="chain" id="PRO_0000412005" description="CASP-like protein 1D1">
    <location>
        <begin position="1"/>
        <end position="194"/>
    </location>
</feature>
<feature type="topological domain" description="Cytoplasmic" evidence="2">
    <location>
        <begin position="1"/>
        <end position="31"/>
    </location>
</feature>
<feature type="transmembrane region" description="Helical" evidence="2">
    <location>
        <begin position="32"/>
        <end position="52"/>
    </location>
</feature>
<feature type="topological domain" description="Extracellular" evidence="2">
    <location>
        <begin position="53"/>
        <end position="77"/>
    </location>
</feature>
<feature type="transmembrane region" description="Helical" evidence="2">
    <location>
        <begin position="78"/>
        <end position="98"/>
    </location>
</feature>
<feature type="topological domain" description="Cytoplasmic" evidence="2">
    <location>
        <begin position="99"/>
        <end position="109"/>
    </location>
</feature>
<feature type="transmembrane region" description="Helical" evidence="2">
    <location>
        <begin position="110"/>
        <end position="130"/>
    </location>
</feature>
<feature type="topological domain" description="Extracellular" evidence="2">
    <location>
        <begin position="131"/>
        <end position="163"/>
    </location>
</feature>
<feature type="transmembrane region" description="Helical" evidence="2">
    <location>
        <begin position="164"/>
        <end position="184"/>
    </location>
</feature>
<feature type="topological domain" description="Cytoplasmic" evidence="2">
    <location>
        <begin position="185"/>
        <end position="194"/>
    </location>
</feature>
<feature type="region of interest" description="Disordered" evidence="3">
    <location>
        <begin position="1"/>
        <end position="23"/>
    </location>
</feature>
<feature type="compositionally biased region" description="Basic and acidic residues" evidence="3">
    <location>
        <begin position="1"/>
        <end position="16"/>
    </location>
</feature>
<accession>D7MAF7</accession>
<reference key="1">
    <citation type="journal article" date="2011" name="Nat. Genet.">
        <title>The Arabidopsis lyrata genome sequence and the basis of rapid genome size change.</title>
        <authorList>
            <person name="Hu T.T."/>
            <person name="Pattyn P."/>
            <person name="Bakker E.G."/>
            <person name="Cao J."/>
            <person name="Cheng J.-F."/>
            <person name="Clark R.M."/>
            <person name="Fahlgren N."/>
            <person name="Fawcett J.A."/>
            <person name="Grimwood J."/>
            <person name="Gundlach H."/>
            <person name="Haberer G."/>
            <person name="Hollister J.D."/>
            <person name="Ossowski S."/>
            <person name="Ottilar R.P."/>
            <person name="Salamov A.A."/>
            <person name="Schneeberger K."/>
            <person name="Spannagl M."/>
            <person name="Wang X."/>
            <person name="Yang L."/>
            <person name="Nasrallah M.E."/>
            <person name="Bergelson J."/>
            <person name="Carrington J.C."/>
            <person name="Gaut B.S."/>
            <person name="Schmutz J."/>
            <person name="Mayer K.F.X."/>
            <person name="Van de Peer Y."/>
            <person name="Grigoriev I.V."/>
            <person name="Nordborg M."/>
            <person name="Weigel D."/>
            <person name="Guo Y.-L."/>
        </authorList>
    </citation>
    <scope>NUCLEOTIDE SEQUENCE [LARGE SCALE GENOMIC DNA]</scope>
    <source>
        <strain>cv. MN47</strain>
    </source>
</reference>
<reference key="2">
    <citation type="journal article" date="2014" name="Plant Physiol.">
        <title>Functional and evolutionary analysis of the CASPARIAN STRIP MEMBRANE DOMAIN PROTEIN family.</title>
        <authorList>
            <person name="Roppolo D."/>
            <person name="Boeckmann B."/>
            <person name="Pfister A."/>
            <person name="Boutet E."/>
            <person name="Rubio M.C."/>
            <person name="Denervaud-Tendon V."/>
            <person name="Vermeer J.E."/>
            <person name="Gheyselinck J."/>
            <person name="Xenarios I."/>
            <person name="Geldner N."/>
        </authorList>
    </citation>
    <scope>GENE FAMILY</scope>
    <scope>NOMENCLATURE</scope>
</reference>